<sequence length="227" mass="24341">MKFVAFERAKQGTGASRRLRITGRTPGIVYGGTGEPSLIELDHNALWHAIKKEAFHASVLEMEMGGKTEKVLLRDLQMHPFKQQVLHIDFQRVDARTRLTMKVPLHYSGEEESPAVKVENCLVNHVLTELSISCLPKDLPEFIDINLGGLKKGTSLHVKDITLPKGVKFVAKGGQDNPVLVSVSAVSEEAEADAAAAAAAAVPVDPKAAKAAAAKEAKAGAKPPAKK</sequence>
<dbReference type="EMBL" id="CP000316">
    <property type="protein sequence ID" value="ABE43242.1"/>
    <property type="molecule type" value="Genomic_DNA"/>
</dbReference>
<dbReference type="RefSeq" id="WP_011482241.1">
    <property type="nucleotide sequence ID" value="NC_007948.1"/>
</dbReference>
<dbReference type="SMR" id="Q12E00"/>
<dbReference type="STRING" id="296591.Bpro_1292"/>
<dbReference type="KEGG" id="pol:Bpro_1292"/>
<dbReference type="eggNOG" id="COG1825">
    <property type="taxonomic scope" value="Bacteria"/>
</dbReference>
<dbReference type="HOGENOM" id="CLU_075939_0_1_4"/>
<dbReference type="OrthoDB" id="9806411at2"/>
<dbReference type="Proteomes" id="UP000001983">
    <property type="component" value="Chromosome"/>
</dbReference>
<dbReference type="GO" id="GO:0022625">
    <property type="term" value="C:cytosolic large ribosomal subunit"/>
    <property type="evidence" value="ECO:0007669"/>
    <property type="project" value="TreeGrafter"/>
</dbReference>
<dbReference type="GO" id="GO:0008097">
    <property type="term" value="F:5S rRNA binding"/>
    <property type="evidence" value="ECO:0007669"/>
    <property type="project" value="InterPro"/>
</dbReference>
<dbReference type="GO" id="GO:0003735">
    <property type="term" value="F:structural constituent of ribosome"/>
    <property type="evidence" value="ECO:0007669"/>
    <property type="project" value="InterPro"/>
</dbReference>
<dbReference type="GO" id="GO:0006412">
    <property type="term" value="P:translation"/>
    <property type="evidence" value="ECO:0007669"/>
    <property type="project" value="UniProtKB-UniRule"/>
</dbReference>
<dbReference type="CDD" id="cd00495">
    <property type="entry name" value="Ribosomal_L25_TL5_CTC"/>
    <property type="match status" value="1"/>
</dbReference>
<dbReference type="Gene3D" id="2.170.120.20">
    <property type="entry name" value="Ribosomal protein L25, beta domain"/>
    <property type="match status" value="1"/>
</dbReference>
<dbReference type="Gene3D" id="2.40.240.10">
    <property type="entry name" value="Ribosomal Protein L25, Chain P"/>
    <property type="match status" value="1"/>
</dbReference>
<dbReference type="HAMAP" id="MF_01336">
    <property type="entry name" value="Ribosomal_bL25"/>
    <property type="match status" value="1"/>
</dbReference>
<dbReference type="HAMAP" id="MF_01334">
    <property type="entry name" value="Ribosomal_bL25_CTC"/>
    <property type="match status" value="1"/>
</dbReference>
<dbReference type="InterPro" id="IPR020056">
    <property type="entry name" value="Rbsml_bL25/Gln-tRNA_synth_N"/>
</dbReference>
<dbReference type="InterPro" id="IPR011035">
    <property type="entry name" value="Ribosomal_bL25/Gln-tRNA_synth"/>
</dbReference>
<dbReference type="InterPro" id="IPR020057">
    <property type="entry name" value="Ribosomal_bL25_b-dom"/>
</dbReference>
<dbReference type="InterPro" id="IPR037121">
    <property type="entry name" value="Ribosomal_bL25_C"/>
</dbReference>
<dbReference type="InterPro" id="IPR001021">
    <property type="entry name" value="Ribosomal_bL25_long"/>
</dbReference>
<dbReference type="InterPro" id="IPR020055">
    <property type="entry name" value="Ribosomal_bL25_short"/>
</dbReference>
<dbReference type="InterPro" id="IPR029751">
    <property type="entry name" value="Ribosomal_L25_dom"/>
</dbReference>
<dbReference type="InterPro" id="IPR020930">
    <property type="entry name" value="Ribosomal_uL5_bac-type"/>
</dbReference>
<dbReference type="NCBIfam" id="TIGR00731">
    <property type="entry name" value="bL25_bact_ctc"/>
    <property type="match status" value="1"/>
</dbReference>
<dbReference type="NCBIfam" id="NF004128">
    <property type="entry name" value="PRK05618.1-2"/>
    <property type="match status" value="1"/>
</dbReference>
<dbReference type="NCBIfam" id="NF004130">
    <property type="entry name" value="PRK05618.1-5"/>
    <property type="match status" value="1"/>
</dbReference>
<dbReference type="NCBIfam" id="NF004612">
    <property type="entry name" value="PRK05943.1"/>
    <property type="match status" value="1"/>
</dbReference>
<dbReference type="PANTHER" id="PTHR33284">
    <property type="entry name" value="RIBOSOMAL PROTEIN L25/GLN-TRNA SYNTHETASE, ANTI-CODON-BINDING DOMAIN-CONTAINING PROTEIN"/>
    <property type="match status" value="1"/>
</dbReference>
<dbReference type="PANTHER" id="PTHR33284:SF1">
    <property type="entry name" value="RIBOSOMAL PROTEIN L25_GLN-TRNA SYNTHETASE, ANTI-CODON-BINDING DOMAIN-CONTAINING PROTEIN"/>
    <property type="match status" value="1"/>
</dbReference>
<dbReference type="Pfam" id="PF01386">
    <property type="entry name" value="Ribosomal_L25p"/>
    <property type="match status" value="1"/>
</dbReference>
<dbReference type="Pfam" id="PF14693">
    <property type="entry name" value="Ribosomal_TL5_C"/>
    <property type="match status" value="1"/>
</dbReference>
<dbReference type="SUPFAM" id="SSF50715">
    <property type="entry name" value="Ribosomal protein L25-like"/>
    <property type="match status" value="1"/>
</dbReference>
<gene>
    <name evidence="1" type="primary">rplY</name>
    <name evidence="1" type="synonym">ctc</name>
    <name type="ordered locus">Bpro_1292</name>
</gene>
<name>RL25_POLSJ</name>
<proteinExistence type="inferred from homology"/>
<organism>
    <name type="scientific">Polaromonas sp. (strain JS666 / ATCC BAA-500)</name>
    <dbReference type="NCBI Taxonomy" id="296591"/>
    <lineage>
        <taxon>Bacteria</taxon>
        <taxon>Pseudomonadati</taxon>
        <taxon>Pseudomonadota</taxon>
        <taxon>Betaproteobacteria</taxon>
        <taxon>Burkholderiales</taxon>
        <taxon>Comamonadaceae</taxon>
        <taxon>Polaromonas</taxon>
    </lineage>
</organism>
<reference key="1">
    <citation type="journal article" date="2008" name="Appl. Environ. Microbiol.">
        <title>The genome of Polaromonas sp. strain JS666: insights into the evolution of a hydrocarbon- and xenobiotic-degrading bacterium, and features of relevance to biotechnology.</title>
        <authorList>
            <person name="Mattes T.E."/>
            <person name="Alexander A.K."/>
            <person name="Richardson P.M."/>
            <person name="Munk A.C."/>
            <person name="Han C.S."/>
            <person name="Stothard P."/>
            <person name="Coleman N.V."/>
        </authorList>
    </citation>
    <scope>NUCLEOTIDE SEQUENCE [LARGE SCALE GENOMIC DNA]</scope>
    <source>
        <strain>JS666 / ATCC BAA-500</strain>
    </source>
</reference>
<protein>
    <recommendedName>
        <fullName evidence="1">Large ribosomal subunit protein bL25</fullName>
    </recommendedName>
    <alternativeName>
        <fullName evidence="2">50S ribosomal protein L25</fullName>
    </alternativeName>
    <alternativeName>
        <fullName evidence="1">General stress protein CTC</fullName>
    </alternativeName>
</protein>
<evidence type="ECO:0000255" key="1">
    <source>
        <dbReference type="HAMAP-Rule" id="MF_01334"/>
    </source>
</evidence>
<evidence type="ECO:0000305" key="2"/>
<comment type="function">
    <text evidence="1">This is one of the proteins that binds to the 5S RNA in the ribosome where it forms part of the central protuberance.</text>
</comment>
<comment type="subunit">
    <text evidence="1">Part of the 50S ribosomal subunit; part of the 5S rRNA/L5/L18/L25 subcomplex. Contacts the 5S rRNA. Binds to the 5S rRNA independently of L5 and L18.</text>
</comment>
<comment type="similarity">
    <text evidence="1">Belongs to the bacterial ribosomal protein bL25 family. CTC subfamily.</text>
</comment>
<feature type="chain" id="PRO_1000052916" description="Large ribosomal subunit protein bL25">
    <location>
        <begin position="1"/>
        <end position="227"/>
    </location>
</feature>
<keyword id="KW-1185">Reference proteome</keyword>
<keyword id="KW-0687">Ribonucleoprotein</keyword>
<keyword id="KW-0689">Ribosomal protein</keyword>
<keyword id="KW-0694">RNA-binding</keyword>
<keyword id="KW-0699">rRNA-binding</keyword>
<accession>Q12E00</accession>